<gene>
    <name type="primary">BMX</name>
</gene>
<name>BMX_HUMAN</name>
<protein>
    <recommendedName>
        <fullName>Cytoplasmic tyrosine-protein kinase BMX</fullName>
        <ecNumber>2.7.10.2</ecNumber>
    </recommendedName>
    <alternativeName>
        <fullName>Bone marrow tyrosine kinase gene in chromosome X protein</fullName>
    </alternativeName>
    <alternativeName>
        <fullName>Epithelial and endothelial tyrosine kinase</fullName>
        <shortName>ETK</shortName>
    </alternativeName>
    <alternativeName>
        <fullName>NTK38</fullName>
    </alternativeName>
</protein>
<dbReference type="EC" id="2.7.10.2"/>
<dbReference type="EMBL" id="X83107">
    <property type="protein sequence ID" value="CAA58169.1"/>
    <property type="molecule type" value="mRNA"/>
</dbReference>
<dbReference type="EMBL" id="AF045459">
    <property type="protein sequence ID" value="AAC08966.1"/>
    <property type="status" value="ALT_INIT"/>
    <property type="molecule type" value="mRNA"/>
</dbReference>
<dbReference type="EMBL" id="AC097625">
    <property type="status" value="NOT_ANNOTATED_CDS"/>
    <property type="molecule type" value="Genomic_DNA"/>
</dbReference>
<dbReference type="EMBL" id="CH471074">
    <property type="protein sequence ID" value="EAW98889.1"/>
    <property type="molecule type" value="Genomic_DNA"/>
</dbReference>
<dbReference type="EMBL" id="BC016652">
    <property type="protein sequence ID" value="AAH16652.1"/>
    <property type="molecule type" value="mRNA"/>
</dbReference>
<dbReference type="EMBL" id="U08341">
    <property type="protein sequence ID" value="AAA17744.1"/>
    <property type="molecule type" value="mRNA"/>
</dbReference>
<dbReference type="CCDS" id="CCDS14168.1"/>
<dbReference type="PIR" id="S60612">
    <property type="entry name" value="S60612"/>
</dbReference>
<dbReference type="RefSeq" id="NP_001307795.1">
    <property type="nucleotide sequence ID" value="NM_001320866.1"/>
</dbReference>
<dbReference type="RefSeq" id="NP_001712.1">
    <property type="nucleotide sequence ID" value="NM_001721.7"/>
</dbReference>
<dbReference type="RefSeq" id="NP_975010.1">
    <property type="nucleotide sequence ID" value="NM_203281.3"/>
</dbReference>
<dbReference type="PDB" id="2EKX">
    <property type="method" value="NMR"/>
    <property type="chains" value="A=291-393"/>
</dbReference>
<dbReference type="PDB" id="2YS2">
    <property type="method" value="NMR"/>
    <property type="chains" value="A=113-149"/>
</dbReference>
<dbReference type="PDB" id="3SXR">
    <property type="method" value="X-ray"/>
    <property type="resolution" value="2.40 A"/>
    <property type="chains" value="A/B=411-675"/>
</dbReference>
<dbReference type="PDB" id="3SXS">
    <property type="method" value="X-ray"/>
    <property type="resolution" value="1.89 A"/>
    <property type="chains" value="A=411-675"/>
</dbReference>
<dbReference type="PDB" id="6I99">
    <property type="method" value="X-ray"/>
    <property type="resolution" value="2.00 A"/>
    <property type="chains" value="A/B=411-675"/>
</dbReference>
<dbReference type="PDB" id="8X2A">
    <property type="method" value="X-ray"/>
    <property type="resolution" value="1.30 A"/>
    <property type="chains" value="A=411-675"/>
</dbReference>
<dbReference type="PDBsum" id="2EKX"/>
<dbReference type="PDBsum" id="2YS2"/>
<dbReference type="PDBsum" id="3SXR"/>
<dbReference type="PDBsum" id="3SXS"/>
<dbReference type="PDBsum" id="6I99"/>
<dbReference type="PDBsum" id="8X2A"/>
<dbReference type="SMR" id="P51813"/>
<dbReference type="BioGRID" id="107128">
    <property type="interactions" value="79"/>
</dbReference>
<dbReference type="FunCoup" id="P51813">
    <property type="interactions" value="297"/>
</dbReference>
<dbReference type="IntAct" id="P51813">
    <property type="interactions" value="80"/>
</dbReference>
<dbReference type="MINT" id="P51813"/>
<dbReference type="STRING" id="9606.ENSP00000350224"/>
<dbReference type="BindingDB" id="P51813"/>
<dbReference type="ChEMBL" id="CHEMBL3834"/>
<dbReference type="DrugBank" id="DB12010">
    <property type="generic name" value="Fostamatinib"/>
</dbReference>
<dbReference type="DrugBank" id="DB14924">
    <property type="generic name" value="Ritlecitinib"/>
</dbReference>
<dbReference type="DrugBank" id="DB15035">
    <property type="generic name" value="Zanubrutinib"/>
</dbReference>
<dbReference type="DrugCentral" id="P51813"/>
<dbReference type="GuidetoPHARMACOLOGY" id="1942"/>
<dbReference type="iPTMnet" id="P51813"/>
<dbReference type="PhosphoSitePlus" id="P51813"/>
<dbReference type="BioMuta" id="BMX"/>
<dbReference type="DMDM" id="1705489"/>
<dbReference type="jPOST" id="P51813"/>
<dbReference type="MassIVE" id="P51813"/>
<dbReference type="PaxDb" id="9606-ENSP00000350224"/>
<dbReference type="PeptideAtlas" id="P51813"/>
<dbReference type="ProteomicsDB" id="56409"/>
<dbReference type="Antibodypedia" id="412">
    <property type="antibodies" value="638 antibodies from 34 providers"/>
</dbReference>
<dbReference type="DNASU" id="660"/>
<dbReference type="Ensembl" id="ENST00000342014.6">
    <property type="protein sequence ID" value="ENSP00000340082.6"/>
    <property type="gene ID" value="ENSG00000102010.15"/>
</dbReference>
<dbReference type="Ensembl" id="ENST00000348343.11">
    <property type="protein sequence ID" value="ENSP00000308774.6"/>
    <property type="gene ID" value="ENSG00000102010.15"/>
</dbReference>
<dbReference type="Ensembl" id="ENST00000357607.6">
    <property type="protein sequence ID" value="ENSP00000350224.2"/>
    <property type="gene ID" value="ENSG00000102010.15"/>
</dbReference>
<dbReference type="GeneID" id="660"/>
<dbReference type="KEGG" id="hsa:660"/>
<dbReference type="MANE-Select" id="ENST00000348343.11">
    <property type="protein sequence ID" value="ENSP00000308774.6"/>
    <property type="RefSeq nucleotide sequence ID" value="NM_203281.3"/>
    <property type="RefSeq protein sequence ID" value="NP_975010.1"/>
</dbReference>
<dbReference type="UCSC" id="uc004cww.3">
    <property type="organism name" value="human"/>
</dbReference>
<dbReference type="AGR" id="HGNC:1079"/>
<dbReference type="CTD" id="660"/>
<dbReference type="DisGeNET" id="660"/>
<dbReference type="GeneCards" id="BMX"/>
<dbReference type="HGNC" id="HGNC:1079">
    <property type="gene designation" value="BMX"/>
</dbReference>
<dbReference type="HPA" id="ENSG00000102010">
    <property type="expression patterns" value="Tissue enriched (epididymis)"/>
</dbReference>
<dbReference type="MIM" id="300101">
    <property type="type" value="gene"/>
</dbReference>
<dbReference type="neXtProt" id="NX_P51813"/>
<dbReference type="OpenTargets" id="ENSG00000102010"/>
<dbReference type="PharmGKB" id="PA25389"/>
<dbReference type="VEuPathDB" id="HostDB:ENSG00000102010"/>
<dbReference type="eggNOG" id="KOG0197">
    <property type="taxonomic scope" value="Eukaryota"/>
</dbReference>
<dbReference type="GeneTree" id="ENSGT00940000161172"/>
<dbReference type="HOGENOM" id="CLU_000288_7_2_1"/>
<dbReference type="InParanoid" id="P51813"/>
<dbReference type="OMA" id="PDWWQIR"/>
<dbReference type="OrthoDB" id="4062651at2759"/>
<dbReference type="PAN-GO" id="P51813">
    <property type="GO annotations" value="3 GO annotations based on evolutionary models"/>
</dbReference>
<dbReference type="PhylomeDB" id="P51813"/>
<dbReference type="TreeFam" id="TF351634"/>
<dbReference type="BRENDA" id="2.7.10.2">
    <property type="organism ID" value="2681"/>
</dbReference>
<dbReference type="PathwayCommons" id="P51813"/>
<dbReference type="Reactome" id="R-HSA-111465">
    <property type="pathway name" value="Apoptotic cleavage of cellular proteins"/>
</dbReference>
<dbReference type="Reactome" id="R-HSA-1660499">
    <property type="pathway name" value="Synthesis of PIPs at the plasma membrane"/>
</dbReference>
<dbReference type="SignaLink" id="P51813"/>
<dbReference type="SIGNOR" id="P51813"/>
<dbReference type="BioGRID-ORCS" id="660">
    <property type="hits" value="11 hits in 788 CRISPR screens"/>
</dbReference>
<dbReference type="ChiTaRS" id="BMX">
    <property type="organism name" value="human"/>
</dbReference>
<dbReference type="EvolutionaryTrace" id="P51813"/>
<dbReference type="GeneWiki" id="BMX_(gene)"/>
<dbReference type="GenomeRNAi" id="660"/>
<dbReference type="Pharos" id="P51813">
    <property type="development level" value="Tchem"/>
</dbReference>
<dbReference type="PRO" id="PR:P51813"/>
<dbReference type="Proteomes" id="UP000005640">
    <property type="component" value="Chromosome X"/>
</dbReference>
<dbReference type="RNAct" id="P51813">
    <property type="molecule type" value="protein"/>
</dbReference>
<dbReference type="Bgee" id="ENSG00000102010">
    <property type="expression patterns" value="Expressed in corpus epididymis and 106 other cell types or tissues"/>
</dbReference>
<dbReference type="GO" id="GO:0005829">
    <property type="term" value="C:cytosol"/>
    <property type="evidence" value="ECO:0000304"/>
    <property type="project" value="Reactome"/>
</dbReference>
<dbReference type="GO" id="GO:0005654">
    <property type="term" value="C:nucleoplasm"/>
    <property type="evidence" value="ECO:0000314"/>
    <property type="project" value="HPA"/>
</dbReference>
<dbReference type="GO" id="GO:0005886">
    <property type="term" value="C:plasma membrane"/>
    <property type="evidence" value="ECO:0000314"/>
    <property type="project" value="HPA"/>
</dbReference>
<dbReference type="GO" id="GO:0032587">
    <property type="term" value="C:ruffle membrane"/>
    <property type="evidence" value="ECO:0000314"/>
    <property type="project" value="UniProtKB"/>
</dbReference>
<dbReference type="GO" id="GO:0005524">
    <property type="term" value="F:ATP binding"/>
    <property type="evidence" value="ECO:0007669"/>
    <property type="project" value="UniProtKB-KW"/>
</dbReference>
<dbReference type="GO" id="GO:0004715">
    <property type="term" value="F:non-membrane spanning protein tyrosine kinase activity"/>
    <property type="evidence" value="ECO:0000314"/>
    <property type="project" value="UniProtKB"/>
</dbReference>
<dbReference type="GO" id="GO:0004713">
    <property type="term" value="F:protein tyrosine kinase activity"/>
    <property type="evidence" value="ECO:0000304"/>
    <property type="project" value="ProtInc"/>
</dbReference>
<dbReference type="GO" id="GO:0008270">
    <property type="term" value="F:zinc ion binding"/>
    <property type="evidence" value="ECO:0007669"/>
    <property type="project" value="UniProtKB-KW"/>
</dbReference>
<dbReference type="GO" id="GO:0002250">
    <property type="term" value="P:adaptive immune response"/>
    <property type="evidence" value="ECO:0000318"/>
    <property type="project" value="GO_Central"/>
</dbReference>
<dbReference type="GO" id="GO:0006915">
    <property type="term" value="P:apoptotic process"/>
    <property type="evidence" value="ECO:0007669"/>
    <property type="project" value="UniProtKB-KW"/>
</dbReference>
<dbReference type="GO" id="GO:0050853">
    <property type="term" value="P:B cell receptor signaling pathway"/>
    <property type="evidence" value="ECO:0000318"/>
    <property type="project" value="GO_Central"/>
</dbReference>
<dbReference type="GO" id="GO:0007155">
    <property type="term" value="P:cell adhesion"/>
    <property type="evidence" value="ECO:0007669"/>
    <property type="project" value="UniProtKB-KW"/>
</dbReference>
<dbReference type="GO" id="GO:0035556">
    <property type="term" value="P:intracellular signal transduction"/>
    <property type="evidence" value="ECO:0007669"/>
    <property type="project" value="InterPro"/>
</dbReference>
<dbReference type="GO" id="GO:0007498">
    <property type="term" value="P:mesoderm development"/>
    <property type="evidence" value="ECO:0000304"/>
    <property type="project" value="ProtInc"/>
</dbReference>
<dbReference type="GO" id="GO:0006661">
    <property type="term" value="P:phosphatidylinositol biosynthetic process"/>
    <property type="evidence" value="ECO:0000304"/>
    <property type="project" value="Reactome"/>
</dbReference>
<dbReference type="GO" id="GO:0046777">
    <property type="term" value="P:protein autophosphorylation"/>
    <property type="evidence" value="ECO:0000314"/>
    <property type="project" value="UniProtKB"/>
</dbReference>
<dbReference type="GO" id="GO:0006468">
    <property type="term" value="P:protein phosphorylation"/>
    <property type="evidence" value="ECO:0000304"/>
    <property type="project" value="ProtInc"/>
</dbReference>
<dbReference type="GO" id="GO:0007165">
    <property type="term" value="P:signal transduction"/>
    <property type="evidence" value="ECO:0000314"/>
    <property type="project" value="UniProtKB"/>
</dbReference>
<dbReference type="CDD" id="cd01238">
    <property type="entry name" value="PH_Btk"/>
    <property type="match status" value="1"/>
</dbReference>
<dbReference type="CDD" id="cd05113">
    <property type="entry name" value="PTKc_Btk_Bmx"/>
    <property type="match status" value="1"/>
</dbReference>
<dbReference type="CDD" id="cd10399">
    <property type="entry name" value="SH2_Tec_Bmx"/>
    <property type="match status" value="1"/>
</dbReference>
<dbReference type="FunFam" id="1.10.510.10:FF:000052">
    <property type="entry name" value="Tyrosine-protein kinase"/>
    <property type="match status" value="1"/>
</dbReference>
<dbReference type="FunFam" id="2.30.29.30:FF:000238">
    <property type="entry name" value="Tyrosine-protein kinase"/>
    <property type="match status" value="1"/>
</dbReference>
<dbReference type="FunFam" id="3.30.200.20:FF:000053">
    <property type="entry name" value="Tyrosine-protein kinase"/>
    <property type="match status" value="1"/>
</dbReference>
<dbReference type="FunFam" id="3.30.505.10:FF:000060">
    <property type="entry name" value="Tyrosine-protein kinase"/>
    <property type="match status" value="1"/>
</dbReference>
<dbReference type="Gene3D" id="2.30.29.30">
    <property type="entry name" value="Pleckstrin-homology domain (PH domain)/Phosphotyrosine-binding domain (PTB)"/>
    <property type="match status" value="1"/>
</dbReference>
<dbReference type="Gene3D" id="3.30.505.10">
    <property type="entry name" value="SH2 domain"/>
    <property type="match status" value="1"/>
</dbReference>
<dbReference type="Gene3D" id="1.10.510.10">
    <property type="entry name" value="Transferase(Phosphotransferase) domain 1"/>
    <property type="match status" value="1"/>
</dbReference>
<dbReference type="InterPro" id="IPR035875">
    <property type="entry name" value="BMX_SH2"/>
</dbReference>
<dbReference type="InterPro" id="IPR011009">
    <property type="entry name" value="Kinase-like_dom_sf"/>
</dbReference>
<dbReference type="InterPro" id="IPR050198">
    <property type="entry name" value="Non-receptor_tyrosine_kinases"/>
</dbReference>
<dbReference type="InterPro" id="IPR011993">
    <property type="entry name" value="PH-like_dom_sf"/>
</dbReference>
<dbReference type="InterPro" id="IPR001849">
    <property type="entry name" value="PH_domain"/>
</dbReference>
<dbReference type="InterPro" id="IPR000719">
    <property type="entry name" value="Prot_kinase_dom"/>
</dbReference>
<dbReference type="InterPro" id="IPR017441">
    <property type="entry name" value="Protein_kinase_ATP_BS"/>
</dbReference>
<dbReference type="InterPro" id="IPR001245">
    <property type="entry name" value="Ser-Thr/Tyr_kinase_cat_dom"/>
</dbReference>
<dbReference type="InterPro" id="IPR000980">
    <property type="entry name" value="SH2"/>
</dbReference>
<dbReference type="InterPro" id="IPR036860">
    <property type="entry name" value="SH2_dom_sf"/>
</dbReference>
<dbReference type="InterPro" id="IPR008266">
    <property type="entry name" value="Tyr_kinase_AS"/>
</dbReference>
<dbReference type="InterPro" id="IPR020635">
    <property type="entry name" value="Tyr_kinase_cat_dom"/>
</dbReference>
<dbReference type="InterPro" id="IPR001562">
    <property type="entry name" value="Znf_Btk_motif"/>
</dbReference>
<dbReference type="PANTHER" id="PTHR24418">
    <property type="entry name" value="TYROSINE-PROTEIN KINASE"/>
    <property type="match status" value="1"/>
</dbReference>
<dbReference type="Pfam" id="PF00779">
    <property type="entry name" value="BTK"/>
    <property type="match status" value="1"/>
</dbReference>
<dbReference type="Pfam" id="PF00169">
    <property type="entry name" value="PH"/>
    <property type="match status" value="1"/>
</dbReference>
<dbReference type="Pfam" id="PF07714">
    <property type="entry name" value="PK_Tyr_Ser-Thr"/>
    <property type="match status" value="1"/>
</dbReference>
<dbReference type="Pfam" id="PF00017">
    <property type="entry name" value="SH2"/>
    <property type="match status" value="1"/>
</dbReference>
<dbReference type="PRINTS" id="PR00401">
    <property type="entry name" value="SH2DOMAIN"/>
</dbReference>
<dbReference type="PRINTS" id="PR00402">
    <property type="entry name" value="TECBTKDOMAIN"/>
</dbReference>
<dbReference type="PRINTS" id="PR00109">
    <property type="entry name" value="TYRKINASE"/>
</dbReference>
<dbReference type="SMART" id="SM00107">
    <property type="entry name" value="BTK"/>
    <property type="match status" value="1"/>
</dbReference>
<dbReference type="SMART" id="SM00233">
    <property type="entry name" value="PH"/>
    <property type="match status" value="1"/>
</dbReference>
<dbReference type="SMART" id="SM00252">
    <property type="entry name" value="SH2"/>
    <property type="match status" value="1"/>
</dbReference>
<dbReference type="SMART" id="SM00219">
    <property type="entry name" value="TyrKc"/>
    <property type="match status" value="1"/>
</dbReference>
<dbReference type="SUPFAM" id="SSF50729">
    <property type="entry name" value="PH domain-like"/>
    <property type="match status" value="1"/>
</dbReference>
<dbReference type="SUPFAM" id="SSF56112">
    <property type="entry name" value="Protein kinase-like (PK-like)"/>
    <property type="match status" value="1"/>
</dbReference>
<dbReference type="SUPFAM" id="SSF55550">
    <property type="entry name" value="SH2 domain"/>
    <property type="match status" value="1"/>
</dbReference>
<dbReference type="PROSITE" id="PS50003">
    <property type="entry name" value="PH_DOMAIN"/>
    <property type="match status" value="1"/>
</dbReference>
<dbReference type="PROSITE" id="PS00107">
    <property type="entry name" value="PROTEIN_KINASE_ATP"/>
    <property type="match status" value="1"/>
</dbReference>
<dbReference type="PROSITE" id="PS50011">
    <property type="entry name" value="PROTEIN_KINASE_DOM"/>
    <property type="match status" value="1"/>
</dbReference>
<dbReference type="PROSITE" id="PS00109">
    <property type="entry name" value="PROTEIN_KINASE_TYR"/>
    <property type="match status" value="1"/>
</dbReference>
<dbReference type="PROSITE" id="PS50001">
    <property type="entry name" value="SH2"/>
    <property type="match status" value="1"/>
</dbReference>
<dbReference type="PROSITE" id="PS51113">
    <property type="entry name" value="ZF_BTK"/>
    <property type="match status" value="1"/>
</dbReference>
<comment type="function">
    <text evidence="7 8 11 13 14 16 17">Non-receptor tyrosine kinase that plays central but diverse modulatory roles in various signaling processes involved in the regulation of actin reorganization, cell migration, cell proliferation and survival, cell adhesion, and apoptosis. Participates in signal transduction stimulated by growth factor receptors, cytokine receptors, G-protein coupled receptors, antigen receptors and integrins. Induces tyrosine phosphorylation of BCAR1 in response to integrin regulation. Activation of BMX by integrins is mediated by PTK2/FAK1, a key mediator of integrin signaling events leading to the regulation of actin cytoskeleton and cell motility. Plays a critical role in TNF-induced angiogenesis, and implicated in the signaling of TEK and FLT1 receptors, 2 important receptor families essential for angiogenesis. Required for the phosphorylation and activation of STAT3, a transcription factor involved in cell differentiation. Also involved in interleukin-6 (IL6) induced differentiation. Also plays a role in programming adaptive cytoprotection against extracellular stress in different cell systems, salivary epithelial cells, brain endothelial cells, and dermal fibroblasts. May be involved in regulation of endocytosis through its interaction with an endosomal protein RUFY1. May also play a role in the growth and differentiation of hematopoietic cells; as well as in signal transduction in endocardial and arterial endothelial cells.</text>
</comment>
<comment type="catalytic activity">
    <reaction evidence="6">
        <text>L-tyrosyl-[protein] + ATP = O-phospho-L-tyrosyl-[protein] + ADP + H(+)</text>
        <dbReference type="Rhea" id="RHEA:10596"/>
        <dbReference type="Rhea" id="RHEA-COMP:10136"/>
        <dbReference type="Rhea" id="RHEA-COMP:20101"/>
        <dbReference type="ChEBI" id="CHEBI:15378"/>
        <dbReference type="ChEBI" id="CHEBI:30616"/>
        <dbReference type="ChEBI" id="CHEBI:46858"/>
        <dbReference type="ChEBI" id="CHEBI:61978"/>
        <dbReference type="ChEBI" id="CHEBI:456216"/>
        <dbReference type="EC" id="2.7.10.2"/>
    </reaction>
</comment>
<comment type="cofactor">
    <cofactor evidence="1">
        <name>Zn(2+)</name>
        <dbReference type="ChEBI" id="CHEBI:29105"/>
    </cofactor>
    <text evidence="1">Binds 1 zinc ion per subunit.</text>
</comment>
<comment type="activity regulation">
    <text evidence="1 8 11 16">TEK and vascular endothelial growth factor receptor 1 (FLT1) stimulate BMX tyrosine kinase activity (By similarity). Activated by integrins through the mediation of PTK2/FAK1. Activated by TNF through the mediation of TNFRSF1B.</text>
</comment>
<comment type="subunit">
    <text evidence="7 8 9 10 11 13 16">Interacts with BCAR1, CAV1, MYD88, PTK2/FAK1, RUFY1, RUFY2, STAT3, TIRAP and TNFRSF1B.</text>
</comment>
<comment type="interaction">
    <interactant intactId="EBI-696657">
        <id>P51813</id>
    </interactant>
    <interactant intactId="EBI-514538">
        <id>Q13490</id>
        <label>BIRC2</label>
    </interactant>
    <organismsDiffer>false</organismsDiffer>
    <experiments>3</experiments>
</comment>
<comment type="interaction">
    <interactant intactId="EBI-696657">
        <id>P51813</id>
    </interactant>
    <interactant intactId="EBI-352572">
        <id>P08238</id>
        <label>HSP90AB1</label>
    </interactant>
    <organismsDiffer>false</organismsDiffer>
    <experiments>3</experiments>
</comment>
<comment type="interaction">
    <interactant intactId="EBI-696657">
        <id>P51813</id>
    </interactant>
    <interactant intactId="EBI-696621">
        <id>P11309</id>
        <label>PIM1</label>
    </interactant>
    <organismsDiffer>false</organismsDiffer>
    <experiments>2</experiments>
</comment>
<comment type="interaction">
    <interactant intactId="EBI-696657">
        <id>P51813</id>
    </interactant>
    <interactant intactId="EBI-1018633">
        <id>P11309-2</id>
        <label>PIM1</label>
    </interactant>
    <organismsDiffer>false</organismsDiffer>
    <experiments>6</experiments>
</comment>
<comment type="interaction">
    <interactant intactId="EBI-696657">
        <id>P51813</id>
    </interactant>
    <interactant intactId="EBI-2860264">
        <id>Q16825</id>
        <label>PTPN21</label>
    </interactant>
    <organismsDiffer>false</organismsDiffer>
    <experiments>3</experiments>
</comment>
<comment type="interaction">
    <interactant intactId="EBI-696657">
        <id>P51813</id>
    </interactant>
    <interactant intactId="EBI-518675">
        <id>P40763</id>
        <label>STAT3</label>
    </interactant>
    <organismsDiffer>false</organismsDiffer>
    <experiments>8</experiments>
</comment>
<comment type="interaction">
    <interactant intactId="EBI-696657">
        <id>P51813</id>
    </interactant>
    <interactant intactId="EBI-356498">
        <id>P62258</id>
        <label>YWHAE</label>
    </interactant>
    <organismsDiffer>false</organismsDiffer>
    <experiments>2</experiments>
</comment>
<comment type="subcellular location">
    <subcellularLocation>
        <location evidence="13">Cytoplasm</location>
    </subcellularLocation>
    <text>Localizes to the edges of spreading cells when complexed with BCAR1.</text>
</comment>
<comment type="tissue specificity">
    <text>Highly expressed in cells with great migratory potential, including endothelial cells and metastatic carcinoma cell lines.</text>
</comment>
<comment type="induction">
    <text evidence="8 17">Activated by IL6/interleukin-6 through phosphatidylinositol 3-kinase (PI3-kinase) pathway. It is likely that activation occurs through binding of phosphoinositides to the PH domain.</text>
</comment>
<comment type="domain">
    <text evidence="9">SH2 domain mediates interaction with RUFY1.</text>
</comment>
<comment type="PTM">
    <text evidence="7 11 12 16">Phosphorylated in response to protein I/II and to LPS. Phosphorylation at Tyr-566 by SRC and by autocatalysis leads to activation and is required for STAT3 phosphorylation by BMX.</text>
</comment>
<comment type="similarity">
    <text evidence="3">Belongs to the protein kinase superfamily. Tyr protein kinase family. TEC subfamily.</text>
</comment>
<comment type="sequence caution" evidence="18">
    <conflict type="erroneous initiation">
        <sequence resource="EMBL-CDS" id="AAC08966"/>
    </conflict>
    <text>Extended N-terminus.</text>
</comment>
<organism>
    <name type="scientific">Homo sapiens</name>
    <name type="common">Human</name>
    <dbReference type="NCBI Taxonomy" id="9606"/>
    <lineage>
        <taxon>Eukaryota</taxon>
        <taxon>Metazoa</taxon>
        <taxon>Chordata</taxon>
        <taxon>Craniata</taxon>
        <taxon>Vertebrata</taxon>
        <taxon>Euteleostomi</taxon>
        <taxon>Mammalia</taxon>
        <taxon>Eutheria</taxon>
        <taxon>Euarchontoglires</taxon>
        <taxon>Primates</taxon>
        <taxon>Haplorrhini</taxon>
        <taxon>Catarrhini</taxon>
        <taxon>Hominidae</taxon>
        <taxon>Homo</taxon>
    </lineage>
</organism>
<evidence type="ECO:0000250" key="1"/>
<evidence type="ECO:0000255" key="2">
    <source>
        <dbReference type="PROSITE-ProRule" id="PRU00145"/>
    </source>
</evidence>
<evidence type="ECO:0000255" key="3">
    <source>
        <dbReference type="PROSITE-ProRule" id="PRU00159"/>
    </source>
</evidence>
<evidence type="ECO:0000255" key="4">
    <source>
        <dbReference type="PROSITE-ProRule" id="PRU00191"/>
    </source>
</evidence>
<evidence type="ECO:0000255" key="5">
    <source>
        <dbReference type="PROSITE-ProRule" id="PRU00432"/>
    </source>
</evidence>
<evidence type="ECO:0000255" key="6">
    <source>
        <dbReference type="PROSITE-ProRule" id="PRU10028"/>
    </source>
</evidence>
<evidence type="ECO:0000269" key="7">
    <source>
    </source>
</evidence>
<evidence type="ECO:0000269" key="8">
    <source>
    </source>
</evidence>
<evidence type="ECO:0000269" key="9">
    <source>
    </source>
</evidence>
<evidence type="ECO:0000269" key="10">
    <source>
    </source>
</evidence>
<evidence type="ECO:0000269" key="11">
    <source>
    </source>
</evidence>
<evidence type="ECO:0000269" key="12">
    <source>
    </source>
</evidence>
<evidence type="ECO:0000269" key="13">
    <source>
    </source>
</evidence>
<evidence type="ECO:0000269" key="14">
    <source>
    </source>
</evidence>
<evidence type="ECO:0000269" key="15">
    <source>
    </source>
</evidence>
<evidence type="ECO:0000269" key="16">
    <source>
    </source>
</evidence>
<evidence type="ECO:0000269" key="17">
    <source>
    </source>
</evidence>
<evidence type="ECO:0000305" key="18"/>
<evidence type="ECO:0007829" key="19">
    <source>
        <dbReference type="PDB" id="2EKX"/>
    </source>
</evidence>
<evidence type="ECO:0007829" key="20">
    <source>
        <dbReference type="PDB" id="2YS2"/>
    </source>
</evidence>
<evidence type="ECO:0007829" key="21">
    <source>
        <dbReference type="PDB" id="3SXS"/>
    </source>
</evidence>
<evidence type="ECO:0007829" key="22">
    <source>
        <dbReference type="PDB" id="8X2A"/>
    </source>
</evidence>
<accession>P51813</accession>
<accession>A6NIH9</accession>
<accession>O60564</accession>
<accession>Q12871</accession>
<feature type="chain" id="PRO_0000088063" description="Cytoplasmic tyrosine-protein kinase BMX">
    <location>
        <begin position="1"/>
        <end position="675"/>
    </location>
</feature>
<feature type="domain" description="PH" evidence="2">
    <location>
        <begin position="4"/>
        <end position="111"/>
    </location>
</feature>
<feature type="domain" description="SH2" evidence="4">
    <location>
        <begin position="296"/>
        <end position="392"/>
    </location>
</feature>
<feature type="domain" description="Protein kinase" evidence="3">
    <location>
        <begin position="417"/>
        <end position="675"/>
    </location>
</feature>
<feature type="zinc finger region" description="Btk-type" evidence="5">
    <location>
        <begin position="113"/>
        <end position="149"/>
    </location>
</feature>
<feature type="short sequence motif" description="CAV1-binding">
    <location>
        <begin position="596"/>
        <end position="603"/>
    </location>
</feature>
<feature type="active site" description="Proton acceptor" evidence="3 6">
    <location>
        <position position="536"/>
    </location>
</feature>
<feature type="binding site" evidence="5">
    <location>
        <position position="121"/>
    </location>
    <ligand>
        <name>Zn(2+)</name>
        <dbReference type="ChEBI" id="CHEBI:29105"/>
    </ligand>
</feature>
<feature type="binding site" evidence="5">
    <location>
        <position position="132"/>
    </location>
    <ligand>
        <name>Zn(2+)</name>
        <dbReference type="ChEBI" id="CHEBI:29105"/>
    </ligand>
</feature>
<feature type="binding site" evidence="5">
    <location>
        <position position="133"/>
    </location>
    <ligand>
        <name>Zn(2+)</name>
        <dbReference type="ChEBI" id="CHEBI:29105"/>
    </ligand>
</feature>
<feature type="binding site" evidence="5">
    <location>
        <position position="143"/>
    </location>
    <ligand>
        <name>Zn(2+)</name>
        <dbReference type="ChEBI" id="CHEBI:29105"/>
    </ligand>
</feature>
<feature type="binding site" evidence="3">
    <location>
        <begin position="423"/>
        <end position="431"/>
    </location>
    <ligand>
        <name>ATP</name>
        <dbReference type="ChEBI" id="CHEBI:30616"/>
    </ligand>
</feature>
<feature type="binding site" evidence="3">
    <location>
        <position position="445"/>
    </location>
    <ligand>
        <name>ATP</name>
        <dbReference type="ChEBI" id="CHEBI:30616"/>
    </ligand>
</feature>
<feature type="modified residue" description="Phosphotyrosine; by autocatalysis" evidence="12">
    <location>
        <position position="216"/>
    </location>
</feature>
<feature type="modified residue" description="Phosphotyrosine; by autocatalysis" evidence="12">
    <location>
        <position position="224"/>
    </location>
</feature>
<feature type="modified residue" description="Phosphotyrosine; by SRC and autocatalysis" evidence="7">
    <location>
        <position position="566"/>
    </location>
</feature>
<feature type="sequence variant" id="VAR_041674" description="In dbSNP:rs35353387." evidence="15">
    <original>S</original>
    <variation>L</variation>
    <location>
        <position position="284"/>
    </location>
</feature>
<feature type="sequence variant" id="VAR_041675" description="In a lung large cell carcinoma sample; somatic mutation; dbSNP:rs1029888196." evidence="15">
    <original>R</original>
    <variation>W</variation>
    <location>
        <position position="670"/>
    </location>
</feature>
<feature type="mutagenesis site" description="Abolishes almost completely the SRC-induced phosphorylation of BMX." evidence="7">
    <original>Y</original>
    <variation>F</variation>
    <location>
        <position position="566"/>
    </location>
</feature>
<feature type="sequence conflict" description="In Ref. 6; AA sequence." evidence="18" ref="6">
    <original>P</original>
    <variation>G</variation>
    <location>
        <position position="207"/>
    </location>
</feature>
<feature type="sequence conflict" description="In Ref. 7; AAA17744." evidence="18" ref="7">
    <original>A</original>
    <variation>S</variation>
    <location>
        <position position="597"/>
    </location>
</feature>
<feature type="strand" evidence="20">
    <location>
        <begin position="129"/>
        <end position="133"/>
    </location>
</feature>
<feature type="strand" evidence="20">
    <location>
        <begin position="136"/>
        <end position="139"/>
    </location>
</feature>
<feature type="strand" evidence="19">
    <location>
        <begin position="294"/>
        <end position="297"/>
    </location>
</feature>
<feature type="helix" evidence="19">
    <location>
        <begin position="303"/>
        <end position="312"/>
    </location>
</feature>
<feature type="strand" evidence="19">
    <location>
        <begin position="318"/>
        <end position="323"/>
    </location>
</feature>
<feature type="strand" evidence="19">
    <location>
        <begin position="330"/>
        <end position="334"/>
    </location>
</feature>
<feature type="strand" evidence="19">
    <location>
        <begin position="347"/>
        <end position="350"/>
    </location>
</feature>
<feature type="strand" evidence="19">
    <location>
        <begin position="359"/>
        <end position="362"/>
    </location>
</feature>
<feature type="helix" evidence="19">
    <location>
        <begin position="370"/>
        <end position="379"/>
    </location>
</feature>
<feature type="strand" evidence="19">
    <location>
        <begin position="383"/>
        <end position="385"/>
    </location>
</feature>
<feature type="helix" evidence="22">
    <location>
        <begin position="414"/>
        <end position="416"/>
    </location>
</feature>
<feature type="strand" evidence="22">
    <location>
        <begin position="417"/>
        <end position="426"/>
    </location>
</feature>
<feature type="strand" evidence="22">
    <location>
        <begin position="429"/>
        <end position="436"/>
    </location>
</feature>
<feature type="turn" evidence="22">
    <location>
        <begin position="437"/>
        <end position="439"/>
    </location>
</feature>
<feature type="strand" evidence="22">
    <location>
        <begin position="440"/>
        <end position="447"/>
    </location>
</feature>
<feature type="helix" evidence="22">
    <location>
        <begin position="454"/>
        <end position="466"/>
    </location>
</feature>
<feature type="strand" evidence="22">
    <location>
        <begin position="475"/>
        <end position="479"/>
    </location>
</feature>
<feature type="strand" evidence="22">
    <location>
        <begin position="481"/>
        <end position="490"/>
    </location>
</feature>
<feature type="helix" evidence="22">
    <location>
        <begin position="497"/>
        <end position="504"/>
    </location>
</feature>
<feature type="turn" evidence="22">
    <location>
        <begin position="505"/>
        <end position="507"/>
    </location>
</feature>
<feature type="helix" evidence="22">
    <location>
        <begin position="510"/>
        <end position="529"/>
    </location>
</feature>
<feature type="strand" evidence="21">
    <location>
        <begin position="532"/>
        <end position="536"/>
    </location>
</feature>
<feature type="helix" evidence="22">
    <location>
        <begin position="539"/>
        <end position="541"/>
    </location>
</feature>
<feature type="strand" evidence="22">
    <location>
        <begin position="542"/>
        <end position="544"/>
    </location>
</feature>
<feature type="strand" evidence="22">
    <location>
        <begin position="550"/>
        <end position="552"/>
    </location>
</feature>
<feature type="helix" evidence="22">
    <location>
        <begin position="557"/>
        <end position="560"/>
    </location>
</feature>
<feature type="strand" evidence="21">
    <location>
        <begin position="566"/>
        <end position="568"/>
    </location>
</feature>
<feature type="helix" evidence="22">
    <location>
        <begin position="576"/>
        <end position="578"/>
    </location>
</feature>
<feature type="helix" evidence="22">
    <location>
        <begin position="581"/>
        <end position="586"/>
    </location>
</feature>
<feature type="strand" evidence="21">
    <location>
        <begin position="587"/>
        <end position="590"/>
    </location>
</feature>
<feature type="helix" evidence="22">
    <location>
        <begin position="591"/>
        <end position="606"/>
    </location>
</feature>
<feature type="turn" evidence="21">
    <location>
        <begin position="607"/>
        <end position="609"/>
    </location>
</feature>
<feature type="turn" evidence="22">
    <location>
        <begin position="612"/>
        <end position="615"/>
    </location>
</feature>
<feature type="helix" evidence="22">
    <location>
        <begin position="618"/>
        <end position="626"/>
    </location>
</feature>
<feature type="helix" evidence="22">
    <location>
        <begin position="639"/>
        <end position="647"/>
    </location>
</feature>
<feature type="helix" evidence="22">
    <location>
        <begin position="653"/>
        <end position="655"/>
    </location>
</feature>
<feature type="helix" evidence="22">
    <location>
        <begin position="659"/>
        <end position="666"/>
    </location>
</feature>
<feature type="helix" evidence="22">
    <location>
        <begin position="667"/>
        <end position="669"/>
    </location>
</feature>
<sequence>MDTKSILEELLLKRSQQKKKMSPNNYKERLFVLTKTNLSYYEYDKMKRGSRKGSIEIKKIRCVEKVNLEEQTPVERQYPFQIVYKDGLLYVYASNEESRSQWLKALQKEIRGNPHLLVKYHSGFFVDGKFLCCQQSCKAAPGCTLWEAYANLHTAVNEEKHRVPTFPDRVLKIPRAVPVLKMDAPSSSTTLAQYDNESKKNYGSQPPSSSTSLAQYDSNSKKIYGSQPNFNMQYIPREDFPDWWQVRKLKSSSSSEDVASSNQKERNVNHTTSKISWEFPESSSSEEEENLDDYDWFAGNISRSQSEQLLRQKGKEGAFMVRNSSQVGMYTVSLFSKAVNDKKGTVKHYHVHTNAENKLYLAENYCFDSIPKLIHYHQHNSAGMITRLRHPVSTKANKVPDSVSLGNGIWELKREEITLLKELGSGQFGVVQLGKWKGQYDVAVKMIKEGSMSEDEFFQEAQTMMKLSHPKLVKFYGVCSKEYPIYIVTEYISNGCLLNYLRSHGKGLEPSQLLEMCYDVCEGMAFLESHQFIHRDLAARNCLVDRDLCVKVSDFGMTRYVLDDQYVSSVGTKFPVKWSAPEVFHYFKYSSKSDVWAFGILMWEVFSLGKQPYDLYDNSQVVLKVSQGHRLYRPHLASDTIYQIMYSCWHELPEKRPTFQQLLSSIEPLREKDKH</sequence>
<proteinExistence type="evidence at protein level"/>
<reference key="1">
    <citation type="journal article" date="1994" name="Oncogene">
        <title>BMX, a novel nonreceptor tyrosine kinase gene of the BTK/ITK/TEC/TXK family located in chromosome Xp22.2.</title>
        <authorList>
            <person name="Tamagnone L."/>
            <person name="Lahtinen I."/>
            <person name="Mustonen T."/>
            <person name="Virtaneva K."/>
            <person name="Francis F."/>
            <person name="Muscatelli F."/>
            <person name="Alitalo R.P."/>
            <person name="Smith C.I."/>
            <person name="Larsson C."/>
            <person name="Alitalo K."/>
        </authorList>
    </citation>
    <scope>NUCLEOTIDE SEQUENCE [MRNA]</scope>
    <source>
        <tissue>Bone marrow</tissue>
    </source>
</reference>
<reference key="2">
    <citation type="journal article" date="1998" name="Proc. Natl. Acad. Sci. U.S.A.">
        <title>Etk/Bmx, a tyrosine kinase with a pleckstrin-homology domain, is an effector of phosphatidylinositol 3'-kinase and is involved in interleukin 6-induced neuroendocrine differentiation of prostate cancer cells.</title>
        <authorList>
            <person name="Qiu Y."/>
            <person name="Robinson D."/>
            <person name="Pretlow T."/>
            <person name="Kung H.-J."/>
        </authorList>
    </citation>
    <scope>NUCLEOTIDE SEQUENCE [MRNA]</scope>
    <scope>FUNCTION</scope>
    <scope>INDUCTION</scope>
    <source>
        <tissue>Prostate</tissue>
    </source>
</reference>
<reference key="3">
    <citation type="journal article" date="2005" name="Nature">
        <title>The DNA sequence of the human X chromosome.</title>
        <authorList>
            <person name="Ross M.T."/>
            <person name="Grafham D.V."/>
            <person name="Coffey A.J."/>
            <person name="Scherer S."/>
            <person name="McLay K."/>
            <person name="Muzny D."/>
            <person name="Platzer M."/>
            <person name="Howell G.R."/>
            <person name="Burrows C."/>
            <person name="Bird C.P."/>
            <person name="Frankish A."/>
            <person name="Lovell F.L."/>
            <person name="Howe K.L."/>
            <person name="Ashurst J.L."/>
            <person name="Fulton R.S."/>
            <person name="Sudbrak R."/>
            <person name="Wen G."/>
            <person name="Jones M.C."/>
            <person name="Hurles M.E."/>
            <person name="Andrews T.D."/>
            <person name="Scott C.E."/>
            <person name="Searle S."/>
            <person name="Ramser J."/>
            <person name="Whittaker A."/>
            <person name="Deadman R."/>
            <person name="Carter N.P."/>
            <person name="Hunt S.E."/>
            <person name="Chen R."/>
            <person name="Cree A."/>
            <person name="Gunaratne P."/>
            <person name="Havlak P."/>
            <person name="Hodgson A."/>
            <person name="Metzker M.L."/>
            <person name="Richards S."/>
            <person name="Scott G."/>
            <person name="Steffen D."/>
            <person name="Sodergren E."/>
            <person name="Wheeler D.A."/>
            <person name="Worley K.C."/>
            <person name="Ainscough R."/>
            <person name="Ambrose K.D."/>
            <person name="Ansari-Lari M.A."/>
            <person name="Aradhya S."/>
            <person name="Ashwell R.I."/>
            <person name="Babbage A.K."/>
            <person name="Bagguley C.L."/>
            <person name="Ballabio A."/>
            <person name="Banerjee R."/>
            <person name="Barker G.E."/>
            <person name="Barlow K.F."/>
            <person name="Barrett I.P."/>
            <person name="Bates K.N."/>
            <person name="Beare D.M."/>
            <person name="Beasley H."/>
            <person name="Beasley O."/>
            <person name="Beck A."/>
            <person name="Bethel G."/>
            <person name="Blechschmidt K."/>
            <person name="Brady N."/>
            <person name="Bray-Allen S."/>
            <person name="Bridgeman A.M."/>
            <person name="Brown A.J."/>
            <person name="Brown M.J."/>
            <person name="Bonnin D."/>
            <person name="Bruford E.A."/>
            <person name="Buhay C."/>
            <person name="Burch P."/>
            <person name="Burford D."/>
            <person name="Burgess J."/>
            <person name="Burrill W."/>
            <person name="Burton J."/>
            <person name="Bye J.M."/>
            <person name="Carder C."/>
            <person name="Carrel L."/>
            <person name="Chako J."/>
            <person name="Chapman J.C."/>
            <person name="Chavez D."/>
            <person name="Chen E."/>
            <person name="Chen G."/>
            <person name="Chen Y."/>
            <person name="Chen Z."/>
            <person name="Chinault C."/>
            <person name="Ciccodicola A."/>
            <person name="Clark S.Y."/>
            <person name="Clarke G."/>
            <person name="Clee C.M."/>
            <person name="Clegg S."/>
            <person name="Clerc-Blankenburg K."/>
            <person name="Clifford K."/>
            <person name="Cobley V."/>
            <person name="Cole C.G."/>
            <person name="Conquer J.S."/>
            <person name="Corby N."/>
            <person name="Connor R.E."/>
            <person name="David R."/>
            <person name="Davies J."/>
            <person name="Davis C."/>
            <person name="Davis J."/>
            <person name="Delgado O."/>
            <person name="Deshazo D."/>
            <person name="Dhami P."/>
            <person name="Ding Y."/>
            <person name="Dinh H."/>
            <person name="Dodsworth S."/>
            <person name="Draper H."/>
            <person name="Dugan-Rocha S."/>
            <person name="Dunham A."/>
            <person name="Dunn M."/>
            <person name="Durbin K.J."/>
            <person name="Dutta I."/>
            <person name="Eades T."/>
            <person name="Ellwood M."/>
            <person name="Emery-Cohen A."/>
            <person name="Errington H."/>
            <person name="Evans K.L."/>
            <person name="Faulkner L."/>
            <person name="Francis F."/>
            <person name="Frankland J."/>
            <person name="Fraser A.E."/>
            <person name="Galgoczy P."/>
            <person name="Gilbert J."/>
            <person name="Gill R."/>
            <person name="Gloeckner G."/>
            <person name="Gregory S.G."/>
            <person name="Gribble S."/>
            <person name="Griffiths C."/>
            <person name="Grocock R."/>
            <person name="Gu Y."/>
            <person name="Gwilliam R."/>
            <person name="Hamilton C."/>
            <person name="Hart E.A."/>
            <person name="Hawes A."/>
            <person name="Heath P.D."/>
            <person name="Heitmann K."/>
            <person name="Hennig S."/>
            <person name="Hernandez J."/>
            <person name="Hinzmann B."/>
            <person name="Ho S."/>
            <person name="Hoffs M."/>
            <person name="Howden P.J."/>
            <person name="Huckle E.J."/>
            <person name="Hume J."/>
            <person name="Hunt P.J."/>
            <person name="Hunt A.R."/>
            <person name="Isherwood J."/>
            <person name="Jacob L."/>
            <person name="Johnson D."/>
            <person name="Jones S."/>
            <person name="de Jong P.J."/>
            <person name="Joseph S.S."/>
            <person name="Keenan S."/>
            <person name="Kelly S."/>
            <person name="Kershaw J.K."/>
            <person name="Khan Z."/>
            <person name="Kioschis P."/>
            <person name="Klages S."/>
            <person name="Knights A.J."/>
            <person name="Kosiura A."/>
            <person name="Kovar-Smith C."/>
            <person name="Laird G.K."/>
            <person name="Langford C."/>
            <person name="Lawlor S."/>
            <person name="Leversha M."/>
            <person name="Lewis L."/>
            <person name="Liu W."/>
            <person name="Lloyd C."/>
            <person name="Lloyd D.M."/>
            <person name="Loulseged H."/>
            <person name="Loveland J.E."/>
            <person name="Lovell J.D."/>
            <person name="Lozado R."/>
            <person name="Lu J."/>
            <person name="Lyne R."/>
            <person name="Ma J."/>
            <person name="Maheshwari M."/>
            <person name="Matthews L.H."/>
            <person name="McDowall J."/>
            <person name="McLaren S."/>
            <person name="McMurray A."/>
            <person name="Meidl P."/>
            <person name="Meitinger T."/>
            <person name="Milne S."/>
            <person name="Miner G."/>
            <person name="Mistry S.L."/>
            <person name="Morgan M."/>
            <person name="Morris S."/>
            <person name="Mueller I."/>
            <person name="Mullikin J.C."/>
            <person name="Nguyen N."/>
            <person name="Nordsiek G."/>
            <person name="Nyakatura G."/>
            <person name="O'dell C.N."/>
            <person name="Okwuonu G."/>
            <person name="Palmer S."/>
            <person name="Pandian R."/>
            <person name="Parker D."/>
            <person name="Parrish J."/>
            <person name="Pasternak S."/>
            <person name="Patel D."/>
            <person name="Pearce A.V."/>
            <person name="Pearson D.M."/>
            <person name="Pelan S.E."/>
            <person name="Perez L."/>
            <person name="Porter K.M."/>
            <person name="Ramsey Y."/>
            <person name="Reichwald K."/>
            <person name="Rhodes S."/>
            <person name="Ridler K.A."/>
            <person name="Schlessinger D."/>
            <person name="Schueler M.G."/>
            <person name="Sehra H.K."/>
            <person name="Shaw-Smith C."/>
            <person name="Shen H."/>
            <person name="Sheridan E.M."/>
            <person name="Shownkeen R."/>
            <person name="Skuce C.D."/>
            <person name="Smith M.L."/>
            <person name="Sotheran E.C."/>
            <person name="Steingruber H.E."/>
            <person name="Steward C.A."/>
            <person name="Storey R."/>
            <person name="Swann R.M."/>
            <person name="Swarbreck D."/>
            <person name="Tabor P.E."/>
            <person name="Taudien S."/>
            <person name="Taylor T."/>
            <person name="Teague B."/>
            <person name="Thomas K."/>
            <person name="Thorpe A."/>
            <person name="Timms K."/>
            <person name="Tracey A."/>
            <person name="Trevanion S."/>
            <person name="Tromans A.C."/>
            <person name="d'Urso M."/>
            <person name="Verduzco D."/>
            <person name="Villasana D."/>
            <person name="Waldron L."/>
            <person name="Wall M."/>
            <person name="Wang Q."/>
            <person name="Warren J."/>
            <person name="Warry G.L."/>
            <person name="Wei X."/>
            <person name="West A."/>
            <person name="Whitehead S.L."/>
            <person name="Whiteley M.N."/>
            <person name="Wilkinson J.E."/>
            <person name="Willey D.L."/>
            <person name="Williams G."/>
            <person name="Williams L."/>
            <person name="Williamson A."/>
            <person name="Williamson H."/>
            <person name="Wilming L."/>
            <person name="Woodmansey R.L."/>
            <person name="Wray P.W."/>
            <person name="Yen J."/>
            <person name="Zhang J."/>
            <person name="Zhou J."/>
            <person name="Zoghbi H."/>
            <person name="Zorilla S."/>
            <person name="Buck D."/>
            <person name="Reinhardt R."/>
            <person name="Poustka A."/>
            <person name="Rosenthal A."/>
            <person name="Lehrach H."/>
            <person name="Meindl A."/>
            <person name="Minx P.J."/>
            <person name="Hillier L.W."/>
            <person name="Willard H.F."/>
            <person name="Wilson R.K."/>
            <person name="Waterston R.H."/>
            <person name="Rice C.M."/>
            <person name="Vaudin M."/>
            <person name="Coulson A."/>
            <person name="Nelson D.L."/>
            <person name="Weinstock G."/>
            <person name="Sulston J.E."/>
            <person name="Durbin R.M."/>
            <person name="Hubbard T."/>
            <person name="Gibbs R.A."/>
            <person name="Beck S."/>
            <person name="Rogers J."/>
            <person name="Bentley D.R."/>
        </authorList>
    </citation>
    <scope>NUCLEOTIDE SEQUENCE [LARGE SCALE GENOMIC DNA]</scope>
</reference>
<reference key="4">
    <citation type="submission" date="2005-07" db="EMBL/GenBank/DDBJ databases">
        <authorList>
            <person name="Mural R.J."/>
            <person name="Istrail S."/>
            <person name="Sutton G.G."/>
            <person name="Florea L."/>
            <person name="Halpern A.L."/>
            <person name="Mobarry C.M."/>
            <person name="Lippert R."/>
            <person name="Walenz B."/>
            <person name="Shatkay H."/>
            <person name="Dew I."/>
            <person name="Miller J.R."/>
            <person name="Flanigan M.J."/>
            <person name="Edwards N.J."/>
            <person name="Bolanos R."/>
            <person name="Fasulo D."/>
            <person name="Halldorsson B.V."/>
            <person name="Hannenhalli S."/>
            <person name="Turner R."/>
            <person name="Yooseph S."/>
            <person name="Lu F."/>
            <person name="Nusskern D.R."/>
            <person name="Shue B.C."/>
            <person name="Zheng X.H."/>
            <person name="Zhong F."/>
            <person name="Delcher A.L."/>
            <person name="Huson D.H."/>
            <person name="Kravitz S.A."/>
            <person name="Mouchard L."/>
            <person name="Reinert K."/>
            <person name="Remington K.A."/>
            <person name="Clark A.G."/>
            <person name="Waterman M.S."/>
            <person name="Eichler E.E."/>
            <person name="Adams M.D."/>
            <person name="Hunkapiller M.W."/>
            <person name="Myers E.W."/>
            <person name="Venter J.C."/>
        </authorList>
    </citation>
    <scope>NUCLEOTIDE SEQUENCE [LARGE SCALE GENOMIC DNA]</scope>
</reference>
<reference key="5">
    <citation type="journal article" date="2004" name="Genome Res.">
        <title>The status, quality, and expansion of the NIH full-length cDNA project: the Mammalian Gene Collection (MGC).</title>
        <authorList>
            <consortium name="The MGC Project Team"/>
        </authorList>
    </citation>
    <scope>NUCLEOTIDE SEQUENCE [LARGE SCALE MRNA]</scope>
    <source>
        <tissue>Skin</tissue>
    </source>
</reference>
<reference key="6">
    <citation type="journal article" date="2003" name="Biochim. Biophys. Acta">
        <title>Identification of phosphorylation sites within the SH3 domains of Tec family tyrosine kinases.</title>
        <authorList>
            <person name="Nore B.F."/>
            <person name="Mattsson P.T."/>
            <person name="Antonsson P."/>
            <person name="Backesjo C.-M."/>
            <person name="Westlund A."/>
            <person name="Lennartsson J."/>
            <person name="Hansson H."/>
            <person name="Low P."/>
            <person name="Ronnstrand L."/>
            <person name="Smith C.I.E."/>
        </authorList>
    </citation>
    <scope>PROTEIN SEQUENCE OF 207-220 AND 223-236</scope>
    <scope>PHOSPHORYLATION AT TYR-216 AND TYR-224</scope>
</reference>
<reference key="7">
    <citation type="thesis" date="1994" institute="Cornell University" country="United States">
        <authorList>
            <person name="Fuortes M."/>
        </authorList>
    </citation>
    <scope>NUCLEOTIDE SEQUENCE [MRNA] OF 536-599</scope>
    <source>
        <tissue>Blood</tissue>
    </source>
</reference>
<reference key="8">
    <citation type="journal article" date="2000" name="Mol. Cell. Biol.">
        <title>Etk, a Btk family tyrosine kinase, mediates cellular transformation by linking Src to STAT3 activation.</title>
        <authorList>
            <person name="Tsai Y.T."/>
            <person name="Su Y.H."/>
            <person name="Fang S.S."/>
            <person name="Huang T.N."/>
            <person name="Qiu Y."/>
            <person name="Jou Y.S."/>
            <person name="Shih H.M."/>
            <person name="Kung H.J."/>
            <person name="Chen R.H."/>
        </authorList>
    </citation>
    <scope>PHOSPHORYLATION AT TYR-566</scope>
    <scope>MUTAGENESIS OF TYR-566</scope>
    <scope>FUNCTION</scope>
    <scope>INTERACTION WITH STAT3</scope>
</reference>
<reference key="9">
    <citation type="journal article" date="2001" name="Nat. Cell Biol.">
        <title>Regulation of the PH-domain-containing tyrosine kinase Etk by focal adhesion kinase through the FERM domain.</title>
        <authorList>
            <person name="Chen R."/>
            <person name="Kim O."/>
            <person name="Li M."/>
            <person name="Xiong X."/>
            <person name="Guan J.L."/>
            <person name="Kung H.J."/>
            <person name="Chen H."/>
            <person name="Shimizu Y."/>
            <person name="Qiu Y."/>
        </authorList>
    </citation>
    <scope>INDUCTION</scope>
    <scope>INTERACTION WITH PTK2/FAK1</scope>
    <scope>ACTIVITY REGULATION</scope>
    <scope>FUNCTION</scope>
</reference>
<reference key="10">
    <citation type="journal article" date="2002" name="J. Biol. Chem.">
        <title>Functional interaction of caveolin-1 with Bruton's tyrosine kinase and Bmx.</title>
        <authorList>
            <person name="Vargas L."/>
            <person name="Nore B.F."/>
            <person name="Berglof A."/>
            <person name="Heinonen J.E."/>
            <person name="Mattsson P.T."/>
            <person name="Smith C.I."/>
            <person name="Mohamed A.J."/>
        </authorList>
    </citation>
    <scope>DOMAIN</scope>
    <scope>INTERACTION WITH CAV1</scope>
</reference>
<reference key="11">
    <citation type="journal article" date="2002" name="J. Biol. Chem.">
        <title>Interaction between tyrosine kinase Etk and a RUN-domain and FYVE-domain containing protein RUFY1. A possible role of Etk in regulation of vesicle trafficking.</title>
        <authorList>
            <person name="Yang J."/>
            <person name="Kim O."/>
            <person name="Wu J."/>
            <person name="Qiu Y."/>
        </authorList>
    </citation>
    <scope>INTERACTION WITH RUFY1 AND RUFY2</scope>
</reference>
<reference key="12">
    <citation type="journal article" date="2002" name="Mol. Cell. Biol.">
        <title>Etk/Bmx as a tumor necrosis factor receptor type 2-specific kinase: role in endothelial cell migration and angiogenesis.</title>
        <authorList>
            <person name="Pan S."/>
            <person name="An P."/>
            <person name="Zhang R."/>
            <person name="He X."/>
            <person name="Yin G."/>
            <person name="Min W."/>
        </authorList>
    </citation>
    <scope>ACTIVITY REGULATION</scope>
    <scope>PHOSPHORYLATION</scope>
    <scope>FUNCTION</scope>
    <scope>INTERACTION WITH TNFRSF1B</scope>
</reference>
<reference key="13">
    <citation type="journal article" date="2003" name="J. Biol. Chem.">
        <title>p130Cas Couples the tyrosine kinase Bmx/Etk with regulation of the actin cytoskeleton and cell migration.</title>
        <authorList>
            <person name="Abassi Y.A."/>
            <person name="Rehn M."/>
            <person name="Ekman N."/>
            <person name="Alitalo K."/>
            <person name="Vuori K."/>
        </authorList>
    </citation>
    <scope>FUNCTION</scope>
    <scope>SUBCELLULAR LOCATION</scope>
    <scope>INTERACTION WITH BCAR1</scope>
</reference>
<reference key="14">
    <citation type="journal article" date="2005" name="Am. J. Physiol.">
        <title>Etk/Bmx mediates expression of stress-induced adaptive genes VEGF, PAI-1, and iNOS via multiple signaling cascades in different cell systems.</title>
        <authorList>
            <person name="Chau C.H."/>
            <person name="Clavijo C.A."/>
            <person name="Deng H.T."/>
            <person name="Zhang Q."/>
            <person name="Kim K.J."/>
            <person name="Qiu Y."/>
            <person name="Le A.D."/>
            <person name="Ann D.K."/>
        </authorList>
    </citation>
    <scope>FUNCTION</scope>
</reference>
<reference key="15">
    <citation type="journal article" date="2008" name="J. Immunol.">
        <title>Etk/BMX, a Btk family tyrosine kinase, and Mal contribute to the cross-talk between MyD88 and FAK pathways.</title>
        <authorList>
            <person name="Semaan N."/>
            <person name="Alsaleh G."/>
            <person name="Gottenberg J.E."/>
            <person name="Wachsmann D."/>
            <person name="Sibilia J."/>
        </authorList>
    </citation>
    <scope>PHOSPHORYLATION</scope>
    <scope>ACTIVITY REGULATION</scope>
    <scope>FUNCTION</scope>
    <scope>INTERACTION WITH MYD88; PTK2/FAK1 AND TIRAP</scope>
</reference>
<reference key="16">
    <citation type="journal article" date="2000" name="Oncogene">
        <title>Signaling network of the Btk family kinases.</title>
        <authorList>
            <person name="Qiu Y."/>
            <person name="Kung H.J."/>
        </authorList>
    </citation>
    <scope>REVIEW ON FUNCTION</scope>
</reference>
<reference key="17">
    <citation type="journal article" date="2001" name="Bioessays">
        <title>The Tec family of cytoplasmic tyrosine kinases: mammalian Btk, Bmx, Itk, Tec, Txk and homologs in other species.</title>
        <authorList>
            <person name="Smith C.I."/>
            <person name="Islam T.C."/>
            <person name="Mattsson P.T."/>
            <person name="Mohamed A.J."/>
            <person name="Nore B.F."/>
            <person name="Vihinen M."/>
        </authorList>
    </citation>
    <scope>REVIEW ON FUNCTION</scope>
</reference>
<reference key="18">
    <citation type="journal article" date="2007" name="Immunol. Rev.">
        <title>Tec kinases, actin, and cell adhesion.</title>
        <authorList>
            <person name="Gomez-Rodriguez J."/>
            <person name="Readinger J.A."/>
            <person name="Viorritto I.C."/>
            <person name="Mueller K.L."/>
            <person name="Houghtling R.A."/>
            <person name="Schwartzberg P.L."/>
        </authorList>
    </citation>
    <scope>REVIEW ON FUNCTION</scope>
</reference>
<reference key="19">
    <citation type="submission" date="2007-10" db="PDB data bank">
        <title>Solution structure of the human BMX SH2 domain and of the BTK motif of human cytoplasmic tyrosine-protein kinase BMX.</title>
        <authorList>
            <consortium name="RIKEN structural genomics initiative (RSGI)"/>
        </authorList>
    </citation>
    <scope>STRUCTURE BY NMR OF 112-393</scope>
</reference>
<reference key="20">
    <citation type="submission" date="2009-02" db="PDB data bank">
        <title>Solution structure of the human bmx SH2 domain.</title>
        <authorList>
            <consortium name="RIKEN structural genomics initiative (RSGI)"/>
        </authorList>
    </citation>
    <scope>STRUCTURE BY NMR OF 291-393</scope>
</reference>
<reference key="21">
    <citation type="journal article" date="2007" name="Nature">
        <title>Patterns of somatic mutation in human cancer genomes.</title>
        <authorList>
            <person name="Greenman C."/>
            <person name="Stephens P."/>
            <person name="Smith R."/>
            <person name="Dalgliesh G.L."/>
            <person name="Hunter C."/>
            <person name="Bignell G."/>
            <person name="Davies H."/>
            <person name="Teague J."/>
            <person name="Butler A."/>
            <person name="Stevens C."/>
            <person name="Edkins S."/>
            <person name="O'Meara S."/>
            <person name="Vastrik I."/>
            <person name="Schmidt E.E."/>
            <person name="Avis T."/>
            <person name="Barthorpe S."/>
            <person name="Bhamra G."/>
            <person name="Buck G."/>
            <person name="Choudhury B."/>
            <person name="Clements J."/>
            <person name="Cole J."/>
            <person name="Dicks E."/>
            <person name="Forbes S."/>
            <person name="Gray K."/>
            <person name="Halliday K."/>
            <person name="Harrison R."/>
            <person name="Hills K."/>
            <person name="Hinton J."/>
            <person name="Jenkinson A."/>
            <person name="Jones D."/>
            <person name="Menzies A."/>
            <person name="Mironenko T."/>
            <person name="Perry J."/>
            <person name="Raine K."/>
            <person name="Richardson D."/>
            <person name="Shepherd R."/>
            <person name="Small A."/>
            <person name="Tofts C."/>
            <person name="Varian J."/>
            <person name="Webb T."/>
            <person name="West S."/>
            <person name="Widaa S."/>
            <person name="Yates A."/>
            <person name="Cahill D.P."/>
            <person name="Louis D.N."/>
            <person name="Goldstraw P."/>
            <person name="Nicholson A.G."/>
            <person name="Brasseur F."/>
            <person name="Looijenga L."/>
            <person name="Weber B.L."/>
            <person name="Chiew Y.-E."/>
            <person name="DeFazio A."/>
            <person name="Greaves M.F."/>
            <person name="Green A.R."/>
            <person name="Campbell P."/>
            <person name="Birney E."/>
            <person name="Easton D.F."/>
            <person name="Chenevix-Trench G."/>
            <person name="Tan M.-H."/>
            <person name="Khoo S.K."/>
            <person name="Teh B.T."/>
            <person name="Yuen S.T."/>
            <person name="Leung S.Y."/>
            <person name="Wooster R."/>
            <person name="Futreal P.A."/>
            <person name="Stratton M.R."/>
        </authorList>
    </citation>
    <scope>VARIANTS [LARGE SCALE ANALYSIS] LEU-284 AND TRP-670</scope>
</reference>
<keyword id="KW-0002">3D-structure</keyword>
<keyword id="KW-0053">Apoptosis</keyword>
<keyword id="KW-0067">ATP-binding</keyword>
<keyword id="KW-0130">Cell adhesion</keyword>
<keyword id="KW-0963">Cytoplasm</keyword>
<keyword id="KW-0903">Direct protein sequencing</keyword>
<keyword id="KW-0418">Kinase</keyword>
<keyword id="KW-0479">Metal-binding</keyword>
<keyword id="KW-0547">Nucleotide-binding</keyword>
<keyword id="KW-0597">Phosphoprotein</keyword>
<keyword id="KW-1267">Proteomics identification</keyword>
<keyword id="KW-1185">Reference proteome</keyword>
<keyword id="KW-0727">SH2 domain</keyword>
<keyword id="KW-0346">Stress response</keyword>
<keyword id="KW-0808">Transferase</keyword>
<keyword id="KW-0829">Tyrosine-protein kinase</keyword>
<keyword id="KW-0862">Zinc</keyword>
<keyword id="KW-0863">Zinc-finger</keyword>